<protein>
    <recommendedName>
        <fullName evidence="8">Reversion-inducing cysteine-rich protein with Kazal motifs</fullName>
        <shortName evidence="8">hRECK</shortName>
    </recommendedName>
    <alternativeName>
        <fullName evidence="10">Suppressor of tumorigenicity 15 protein</fullName>
    </alternativeName>
</protein>
<name>RECK_HUMAN</name>
<accession>O95980</accession>
<accession>B2RNS1</accession>
<accession>Q5W0K6</accession>
<accession>Q8WX37</accession>
<evidence type="ECO:0000250" key="1">
    <source>
        <dbReference type="UniProtKB" id="Q9Z0J1"/>
    </source>
</evidence>
<evidence type="ECO:0000255" key="2"/>
<evidence type="ECO:0000255" key="3">
    <source>
        <dbReference type="PROSITE-ProRule" id="PRU00798"/>
    </source>
</evidence>
<evidence type="ECO:0000269" key="4">
    <source>
    </source>
</evidence>
<evidence type="ECO:0000269" key="5">
    <source>
    </source>
</evidence>
<evidence type="ECO:0000269" key="6">
    <source>
    </source>
</evidence>
<evidence type="ECO:0000269" key="7">
    <source>
    </source>
</evidence>
<evidence type="ECO:0000303" key="8">
    <source>
    </source>
</evidence>
<evidence type="ECO:0000305" key="9"/>
<evidence type="ECO:0000312" key="10">
    <source>
        <dbReference type="EMBL" id="BAA34060.1"/>
    </source>
</evidence>
<evidence type="ECO:0000312" key="11">
    <source>
        <dbReference type="HGNC" id="HGNC:11345"/>
    </source>
</evidence>
<evidence type="ECO:0007829" key="12">
    <source>
        <dbReference type="PDB" id="8TZP"/>
    </source>
</evidence>
<dbReference type="EMBL" id="D50406">
    <property type="protein sequence ID" value="BAA34060.1"/>
    <property type="molecule type" value="mRNA"/>
</dbReference>
<dbReference type="EMBL" id="AL158830">
    <property type="status" value="NOT_ANNOTATED_CDS"/>
    <property type="molecule type" value="Genomic_DNA"/>
</dbReference>
<dbReference type="EMBL" id="AL138834">
    <property type="status" value="NOT_ANNOTATED_CDS"/>
    <property type="molecule type" value="Genomic_DNA"/>
</dbReference>
<dbReference type="EMBL" id="CH471071">
    <property type="protein sequence ID" value="EAW58318.1"/>
    <property type="molecule type" value="Genomic_DNA"/>
</dbReference>
<dbReference type="EMBL" id="BC137093">
    <property type="protein sequence ID" value="AAI37094.1"/>
    <property type="molecule type" value="mRNA"/>
</dbReference>
<dbReference type="CCDS" id="CCDS6597.1"/>
<dbReference type="RefSeq" id="NP_066934.1">
    <property type="nucleotide sequence ID" value="NM_021111.3"/>
</dbReference>
<dbReference type="PDB" id="8TZP">
    <property type="method" value="EM"/>
    <property type="resolution" value="3.23 A"/>
    <property type="chains" value="C=1-971"/>
</dbReference>
<dbReference type="PDBsum" id="8TZP"/>
<dbReference type="EMDB" id="EMD-41765"/>
<dbReference type="SMR" id="O95980"/>
<dbReference type="BioGRID" id="114014">
    <property type="interactions" value="56"/>
</dbReference>
<dbReference type="FunCoup" id="O95980">
    <property type="interactions" value="747"/>
</dbReference>
<dbReference type="IntAct" id="O95980">
    <property type="interactions" value="10"/>
</dbReference>
<dbReference type="MINT" id="O95980"/>
<dbReference type="STRING" id="9606.ENSP00000367202"/>
<dbReference type="MEROPS" id="I01.037"/>
<dbReference type="GlyCosmos" id="O95980">
    <property type="glycosylation" value="6 sites, 1 glycan"/>
</dbReference>
<dbReference type="GlyGen" id="O95980">
    <property type="glycosylation" value="7 sites, 1 N-linked glycan (1 site), 2 O-linked glycans (2 sites)"/>
</dbReference>
<dbReference type="iPTMnet" id="O95980"/>
<dbReference type="PhosphoSitePlus" id="O95980"/>
<dbReference type="BioMuta" id="RECK"/>
<dbReference type="jPOST" id="O95980"/>
<dbReference type="MassIVE" id="O95980"/>
<dbReference type="PaxDb" id="9606-ENSP00000367202"/>
<dbReference type="PeptideAtlas" id="O95980"/>
<dbReference type="ProteomicsDB" id="51158"/>
<dbReference type="Pumba" id="O95980"/>
<dbReference type="Antibodypedia" id="26128">
    <property type="antibodies" value="294 antibodies from 34 providers"/>
</dbReference>
<dbReference type="DNASU" id="8434"/>
<dbReference type="Ensembl" id="ENST00000377966.4">
    <property type="protein sequence ID" value="ENSP00000367202.3"/>
    <property type="gene ID" value="ENSG00000122707.12"/>
</dbReference>
<dbReference type="GeneID" id="8434"/>
<dbReference type="KEGG" id="hsa:8434"/>
<dbReference type="MANE-Select" id="ENST00000377966.4">
    <property type="protein sequence ID" value="ENSP00000367202.3"/>
    <property type="RefSeq nucleotide sequence ID" value="NM_021111.3"/>
    <property type="RefSeq protein sequence ID" value="NP_066934.1"/>
</dbReference>
<dbReference type="UCSC" id="uc003zyv.4">
    <property type="organism name" value="human"/>
</dbReference>
<dbReference type="AGR" id="HGNC:11345"/>
<dbReference type="CTD" id="8434"/>
<dbReference type="DisGeNET" id="8434"/>
<dbReference type="GeneCards" id="RECK"/>
<dbReference type="HGNC" id="HGNC:11345">
    <property type="gene designation" value="RECK"/>
</dbReference>
<dbReference type="HPA" id="ENSG00000122707">
    <property type="expression patterns" value="Low tissue specificity"/>
</dbReference>
<dbReference type="MIM" id="605227">
    <property type="type" value="gene"/>
</dbReference>
<dbReference type="neXtProt" id="NX_O95980"/>
<dbReference type="OpenTargets" id="ENSG00000122707"/>
<dbReference type="PharmGKB" id="PA34314"/>
<dbReference type="VEuPathDB" id="HostDB:ENSG00000122707"/>
<dbReference type="eggNOG" id="KOG3649">
    <property type="taxonomic scope" value="Eukaryota"/>
</dbReference>
<dbReference type="GeneTree" id="ENSGT00390000018540"/>
<dbReference type="HOGENOM" id="CLU_013883_0_0_1"/>
<dbReference type="InParanoid" id="O95980"/>
<dbReference type="OMA" id="GEVCDTQ"/>
<dbReference type="OrthoDB" id="5956770at2759"/>
<dbReference type="PAN-GO" id="O95980">
    <property type="GO annotations" value="6 GO annotations based on evolutionary models"/>
</dbReference>
<dbReference type="PhylomeDB" id="O95980"/>
<dbReference type="TreeFam" id="TF324424"/>
<dbReference type="PathwayCommons" id="O95980"/>
<dbReference type="Reactome" id="R-HSA-163125">
    <property type="pathway name" value="Post-translational modification: synthesis of GPI-anchored proteins"/>
</dbReference>
<dbReference type="SignaLink" id="O95980"/>
<dbReference type="BioGRID-ORCS" id="8434">
    <property type="hits" value="11 hits in 1149 CRISPR screens"/>
</dbReference>
<dbReference type="ChiTaRS" id="RECK">
    <property type="organism name" value="human"/>
</dbReference>
<dbReference type="GeneWiki" id="RECK"/>
<dbReference type="GenomeRNAi" id="8434"/>
<dbReference type="Pharos" id="O95980">
    <property type="development level" value="Tbio"/>
</dbReference>
<dbReference type="PRO" id="PR:O95980"/>
<dbReference type="Proteomes" id="UP000005640">
    <property type="component" value="Chromosome 9"/>
</dbReference>
<dbReference type="RNAct" id="O95980">
    <property type="molecule type" value="protein"/>
</dbReference>
<dbReference type="Bgee" id="ENSG00000122707">
    <property type="expression patterns" value="Expressed in skin of hip and 198 other cell types or tissues"/>
</dbReference>
<dbReference type="GO" id="GO:0005576">
    <property type="term" value="C:extracellular region"/>
    <property type="evidence" value="ECO:0000304"/>
    <property type="project" value="Reactome"/>
</dbReference>
<dbReference type="GO" id="GO:0016020">
    <property type="term" value="C:membrane"/>
    <property type="evidence" value="ECO:0000304"/>
    <property type="project" value="ProtInc"/>
</dbReference>
<dbReference type="GO" id="GO:0005886">
    <property type="term" value="C:plasma membrane"/>
    <property type="evidence" value="ECO:0000314"/>
    <property type="project" value="HPA"/>
</dbReference>
<dbReference type="GO" id="GO:0098552">
    <property type="term" value="C:side of membrane"/>
    <property type="evidence" value="ECO:0007669"/>
    <property type="project" value="UniProtKB-KW"/>
</dbReference>
<dbReference type="GO" id="GO:1990909">
    <property type="term" value="C:Wnt signalosome"/>
    <property type="evidence" value="ECO:0007669"/>
    <property type="project" value="Ensembl"/>
</dbReference>
<dbReference type="GO" id="GO:0015026">
    <property type="term" value="F:coreceptor activity"/>
    <property type="evidence" value="ECO:0007669"/>
    <property type="project" value="Ensembl"/>
</dbReference>
<dbReference type="GO" id="GO:0004866">
    <property type="term" value="F:endopeptidase inhibitor activity"/>
    <property type="evidence" value="ECO:0000314"/>
    <property type="project" value="MGI"/>
</dbReference>
<dbReference type="GO" id="GO:0008191">
    <property type="term" value="F:metalloendopeptidase inhibitor activity"/>
    <property type="evidence" value="ECO:0000314"/>
    <property type="project" value="UniProtKB"/>
</dbReference>
<dbReference type="GO" id="GO:0004867">
    <property type="term" value="F:serine-type endopeptidase inhibitor activity"/>
    <property type="evidence" value="ECO:0007669"/>
    <property type="project" value="UniProtKB-KW"/>
</dbReference>
<dbReference type="GO" id="GO:0017147">
    <property type="term" value="F:Wnt-protein binding"/>
    <property type="evidence" value="ECO:0007669"/>
    <property type="project" value="Ensembl"/>
</dbReference>
<dbReference type="GO" id="GO:0001955">
    <property type="term" value="P:blood vessel maturation"/>
    <property type="evidence" value="ECO:0000318"/>
    <property type="project" value="GO_Central"/>
</dbReference>
<dbReference type="GO" id="GO:0060070">
    <property type="term" value="P:canonical Wnt signaling pathway"/>
    <property type="evidence" value="ECO:0007669"/>
    <property type="project" value="Ensembl"/>
</dbReference>
<dbReference type="GO" id="GO:0007566">
    <property type="term" value="P:embryo implantation"/>
    <property type="evidence" value="ECO:0007669"/>
    <property type="project" value="Ensembl"/>
</dbReference>
<dbReference type="GO" id="GO:0035115">
    <property type="term" value="P:embryonic forelimb morphogenesis"/>
    <property type="evidence" value="ECO:0007669"/>
    <property type="project" value="Ensembl"/>
</dbReference>
<dbReference type="GO" id="GO:0030198">
    <property type="term" value="P:extracellular matrix organization"/>
    <property type="evidence" value="ECO:0000318"/>
    <property type="project" value="GO_Central"/>
</dbReference>
<dbReference type="GO" id="GO:0030336">
    <property type="term" value="P:negative regulation of cell migration"/>
    <property type="evidence" value="ECO:0000315"/>
    <property type="project" value="BHF-UCL"/>
</dbReference>
<dbReference type="GO" id="GO:0010716">
    <property type="term" value="P:negative regulation of extracellular matrix disassembly"/>
    <property type="evidence" value="ECO:0000250"/>
    <property type="project" value="BHF-UCL"/>
</dbReference>
<dbReference type="GO" id="GO:1904684">
    <property type="term" value="P:negative regulation of metalloendopeptidase activity"/>
    <property type="evidence" value="ECO:0000314"/>
    <property type="project" value="UniProtKB"/>
</dbReference>
<dbReference type="GO" id="GO:0090263">
    <property type="term" value="P:positive regulation of canonical Wnt signaling pathway"/>
    <property type="evidence" value="ECO:0007669"/>
    <property type="project" value="Ensembl"/>
</dbReference>
<dbReference type="GO" id="GO:0045765">
    <property type="term" value="P:regulation of angiogenesis"/>
    <property type="evidence" value="ECO:0007669"/>
    <property type="project" value="Ensembl"/>
</dbReference>
<dbReference type="GO" id="GO:0060828">
    <property type="term" value="P:regulation of canonical Wnt signaling pathway"/>
    <property type="evidence" value="ECO:0000318"/>
    <property type="project" value="GO_Central"/>
</dbReference>
<dbReference type="GO" id="GO:0090210">
    <property type="term" value="P:regulation of establishment of blood-brain barrier"/>
    <property type="evidence" value="ECO:0007669"/>
    <property type="project" value="Ensembl"/>
</dbReference>
<dbReference type="GO" id="GO:1903053">
    <property type="term" value="P:regulation of extracellular matrix organization"/>
    <property type="evidence" value="ECO:0000315"/>
    <property type="project" value="BHF-UCL"/>
</dbReference>
<dbReference type="GO" id="GO:0002040">
    <property type="term" value="P:sprouting angiogenesis"/>
    <property type="evidence" value="ECO:0000318"/>
    <property type="project" value="GO_Central"/>
</dbReference>
<dbReference type="FunFam" id="3.30.60.30:FF:000011">
    <property type="entry name" value="reversion-inducing cysteine-rich protein with Kazal motifs isoform X1"/>
    <property type="match status" value="1"/>
</dbReference>
<dbReference type="FunFam" id="3.30.60.30:FF:000021">
    <property type="entry name" value="reversion-inducing cysteine-rich protein with Kazal motifs isoform X1"/>
    <property type="match status" value="1"/>
</dbReference>
<dbReference type="Gene3D" id="3.30.60.30">
    <property type="match status" value="2"/>
</dbReference>
<dbReference type="InterPro" id="IPR056978">
    <property type="entry name" value="CC4_RECK"/>
</dbReference>
<dbReference type="InterPro" id="IPR056976">
    <property type="entry name" value="EGF1_RECK"/>
</dbReference>
<dbReference type="InterPro" id="IPR055134">
    <property type="entry name" value="EGF2_RECK_dom"/>
</dbReference>
<dbReference type="InterPro" id="IPR056977">
    <property type="entry name" value="FnI_RECK"/>
</dbReference>
<dbReference type="InterPro" id="IPR056979">
    <property type="entry name" value="FZ_RECK"/>
</dbReference>
<dbReference type="InterPro" id="IPR002350">
    <property type="entry name" value="Kazal_dom"/>
</dbReference>
<dbReference type="InterPro" id="IPR036058">
    <property type="entry name" value="Kazal_dom_sf"/>
</dbReference>
<dbReference type="InterPro" id="IPR039016">
    <property type="entry name" value="RECK"/>
</dbReference>
<dbReference type="InterPro" id="IPR055110">
    <property type="entry name" value="RECK-like_N"/>
</dbReference>
<dbReference type="PANTHER" id="PTHR13487:SF3">
    <property type="entry name" value="REVERSION-INDUCING CYSTEINE-RICH PROTEIN WITH KAZAL MOTIFS"/>
    <property type="match status" value="1"/>
</dbReference>
<dbReference type="PANTHER" id="PTHR13487">
    <property type="entry name" value="SERINE PROTEASE INHIBITOR"/>
    <property type="match status" value="1"/>
</dbReference>
<dbReference type="Pfam" id="PF23332">
    <property type="entry name" value="CC4_RECK"/>
    <property type="match status" value="2"/>
</dbReference>
<dbReference type="Pfam" id="PF25027">
    <property type="entry name" value="EGF1_RECK"/>
    <property type="match status" value="1"/>
</dbReference>
<dbReference type="Pfam" id="PF22955">
    <property type="entry name" value="EGF2_RECK"/>
    <property type="match status" value="1"/>
</dbReference>
<dbReference type="Pfam" id="PF25028">
    <property type="entry name" value="FnI_RECK"/>
    <property type="match status" value="1"/>
</dbReference>
<dbReference type="Pfam" id="PF23298">
    <property type="entry name" value="FZ_RECK"/>
    <property type="match status" value="1"/>
</dbReference>
<dbReference type="Pfam" id="PF07648">
    <property type="entry name" value="Kazal_2"/>
    <property type="match status" value="3"/>
</dbReference>
<dbReference type="Pfam" id="PF22961">
    <property type="entry name" value="RECK-like_N"/>
    <property type="match status" value="1"/>
</dbReference>
<dbReference type="SMART" id="SM00280">
    <property type="entry name" value="KAZAL"/>
    <property type="match status" value="3"/>
</dbReference>
<dbReference type="SUPFAM" id="SSF100895">
    <property type="entry name" value="Kazal-type serine protease inhibitors"/>
    <property type="match status" value="3"/>
</dbReference>
<dbReference type="PROSITE" id="PS00282">
    <property type="entry name" value="KAZAL_1"/>
    <property type="match status" value="1"/>
</dbReference>
<dbReference type="PROSITE" id="PS51465">
    <property type="entry name" value="KAZAL_2"/>
    <property type="match status" value="3"/>
</dbReference>
<sequence>MATVRASLRGALLLLLAVAGVAEVAGGLAPGSAGALCCNHSKDNQMCRDVCEQIFSSKSESRLKHLLQRAPDYCPETMVEIWNCMNSSLPGVFKKSDGWVGLGCCELAIALECRQACKQASSKNDISKVCRKEYENALFSCISRNEMGSVCCSYAGHHTNCREYCQAIFRTDSSPGPSQIKAVENYCASISPQLIHCVNNYTQSYPMRNPTDSLYCCDRAEDHACQNACKRILMSKKTEMEIVDGLIEGCKTQPLPQDPLWQCFLESSQSVHPGVTVHPPPSTGLDGAKLHCCSKANTSTCRELCTKLYSMSWGNTQSWQEFDRFCEYNPVEVSMLTCLADVREPCQLGCRNLTYCTNFNNRPTELFRSCNAQSDQGAMNDMKLWEKGSIKMPFINIPVLDIKKCQPEMWKAIACSLQIKPCHSKSRGSIICKSDCVEILKKCGDQNKFPEDHTAESICELLSPTDDLKNCIPLDTYLRPSTLGNIVEEVTHPCNPNPCPANELCEVNRKGCPSGDPCLPYFCVQGCKLGEASDFIVRQGTLIQVPSSAGEVGCYKICSCGQSGLLENCMEMHCIDLQKSCIVGGKRKSHGTSFSIDCNVCSCFAGNLVCSTRLCLSEHSSEDDRRTFTGLPCNCADQFVPVCGQNGRTYPSACIARCVGLQDHQFEFGSCMSKDPCNPNPCQKNQRCIPKPQVCLTTFDKFGCSQYECVPRQLACDQVQDPVCDTDHMEHNNLCTLYQRGKSLSYKGPCQPFCRATEPVCGHNGETYSSVCAAYSDRVAVDYYGDCQAVGVLSEHSSVAECASVKCPSLLAAGCKPIIPPGACCPLCAGMLRVLFDKEKLDTIAKVTNKKPITVLEILQKIRMHVSVPQCDVFGYFSIESEIVILIIPVDHYPKALQIEACNKEAEKIESLINSDSPTLASHVPLSALIISQVQVSSSVPSAGVRARPSCHSLLLPLSLGLALHLLWTYN</sequence>
<gene>
    <name evidence="8 11" type="primary">RECK</name>
    <name evidence="10" type="synonym">ST15</name>
</gene>
<keyword id="KW-0002">3D-structure</keyword>
<keyword id="KW-1003">Cell membrane</keyword>
<keyword id="KW-1015">Disulfide bond</keyword>
<keyword id="KW-0325">Glycoprotein</keyword>
<keyword id="KW-0336">GPI-anchor</keyword>
<keyword id="KW-0449">Lipoprotein</keyword>
<keyword id="KW-0472">Membrane</keyword>
<keyword id="KW-0646">Protease inhibitor</keyword>
<keyword id="KW-1267">Proteomics identification</keyword>
<keyword id="KW-1185">Reference proteome</keyword>
<keyword id="KW-0677">Repeat</keyword>
<keyword id="KW-0722">Serine protease inhibitor</keyword>
<keyword id="KW-0732">Signal</keyword>
<keyword id="KW-0043">Tumor suppressor</keyword>
<keyword id="KW-0879">Wnt signaling pathway</keyword>
<organism>
    <name type="scientific">Homo sapiens</name>
    <name type="common">Human</name>
    <dbReference type="NCBI Taxonomy" id="9606"/>
    <lineage>
        <taxon>Eukaryota</taxon>
        <taxon>Metazoa</taxon>
        <taxon>Chordata</taxon>
        <taxon>Craniata</taxon>
        <taxon>Vertebrata</taxon>
        <taxon>Euteleostomi</taxon>
        <taxon>Mammalia</taxon>
        <taxon>Eutheria</taxon>
        <taxon>Euarchontoglires</taxon>
        <taxon>Primates</taxon>
        <taxon>Haplorrhini</taxon>
        <taxon>Catarrhini</taxon>
        <taxon>Hominidae</taxon>
        <taxon>Homo</taxon>
    </lineage>
</organism>
<comment type="function">
    <text evidence="1 4 5 6 7">Functions together with ADGRA2 to enable brain endothelial cells to selectively respond to Wnt7 signals (WNT7A or WNT7B) (PubMed:28289266, PubMed:30026314). Plays a key role in Wnt7-specific responses: required for central nervous system (CNS) angiogenesis and blood-brain barrier regulation (By similarity). Acts as a Wnt7-specific coactivator of canonical Wnt signaling by decoding Wnt ligands: acts by interacting specifically with the disordered linker region of Wnt7, thereby conferring ligand selectivity for Wnt7 (PubMed:30026314). ADGRA2 is then required to deliver RECK-bound Wnt7 to frizzled by assembling a higher-order RECK-ADGRA2-Fzd-LRP5-LRP6 complex (PubMed:30026314). Also acts as a serine protease inhibitor: negatively regulates matrix metalloproteinase-9 (MMP9) by suppressing MMP9 secretion and by direct inhibition of its enzymatic activity (PubMed:18194466, PubMed:9789069). Also inhibits metalloproteinase activity of MMP2 and MMP14 (MT1-MMP) (PubMed:9789069).</text>
</comment>
<comment type="subunit">
    <text evidence="6 7">Interacts (via knot repeats) with WNT7A (via disordered linker region); the interaction is direct (PubMed:30026314). Interacts (via knot repeats) with WNT7B (via disordered linker region); the interaction is direct (PubMed:30026314). Interacts with ADGRA2; the interaction is direct (PubMed:30026314). Interacts with MMP9 (PubMed:9789069).</text>
</comment>
<comment type="interaction">
    <interactant intactId="EBI-2823742">
        <id>O95980</id>
    </interactant>
    <interactant intactId="EBI-641062">
        <id>P04626</id>
        <label>ERBB2</label>
    </interactant>
    <organismsDiffer>false</organismsDiffer>
    <experiments>4</experiments>
</comment>
<comment type="subcellular location">
    <subcellularLocation>
        <location evidence="6 7">Cell membrane</location>
        <topology evidence="7">Lipid-anchor</topology>
        <topology evidence="7">GPI-anchor</topology>
    </subcellularLocation>
</comment>
<comment type="tissue specificity">
    <text evidence="7">Expressed in various tissues and untransformed cells (PubMed:9789069). It is undetectable in tumor-derived cell lines and oncogenically transformed cells (PubMed:9789069).</text>
</comment>
<comment type="domain">
    <text evidence="4">The Kazal-like domains mediate the serine protease inhibitor activity.</text>
</comment>
<comment type="PTM">
    <text evidence="7">N-glycosylated.</text>
</comment>
<comment type="similarity">
    <text evidence="9">Belongs to the RECK family.</text>
</comment>
<reference key="1">
    <citation type="journal article" date="1998" name="Proc. Natl. Acad. Sci. U.S.A.">
        <title>Regulation of matrix metalloproteinase-9 and inhibition of tumor invasion by the membrane-anchored glycoprotein RECK.</title>
        <authorList>
            <person name="Takahashi C."/>
            <person name="Sheng Z."/>
            <person name="Horan T.P."/>
            <person name="Kitayama H."/>
            <person name="Maki M."/>
            <person name="Hitomi K."/>
            <person name="Kitaura Y."/>
            <person name="Takai S."/>
            <person name="Sasahara R.M."/>
            <person name="Horimoto A."/>
            <person name="Ikawa Y."/>
            <person name="Ratzkin B.J."/>
            <person name="Arakawa T."/>
            <person name="Noda M."/>
        </authorList>
    </citation>
    <scope>NUCLEOTIDE SEQUENCE [MRNA]</scope>
    <scope>FUNCTION</scope>
    <scope>SUBCELLULAR LOCATION</scope>
    <scope>GLYCOSYLATION</scope>
    <scope>TISSUE SPECIFICITY</scope>
    <source>
        <tissue>Fibroblast</tissue>
    </source>
</reference>
<reference key="2">
    <citation type="journal article" date="2004" name="Nature">
        <title>DNA sequence and analysis of human chromosome 9.</title>
        <authorList>
            <person name="Humphray S.J."/>
            <person name="Oliver K."/>
            <person name="Hunt A.R."/>
            <person name="Plumb R.W."/>
            <person name="Loveland J.E."/>
            <person name="Howe K.L."/>
            <person name="Andrews T.D."/>
            <person name="Searle S."/>
            <person name="Hunt S.E."/>
            <person name="Scott C.E."/>
            <person name="Jones M.C."/>
            <person name="Ainscough R."/>
            <person name="Almeida J.P."/>
            <person name="Ambrose K.D."/>
            <person name="Ashwell R.I.S."/>
            <person name="Babbage A.K."/>
            <person name="Babbage S."/>
            <person name="Bagguley C.L."/>
            <person name="Bailey J."/>
            <person name="Banerjee R."/>
            <person name="Barker D.J."/>
            <person name="Barlow K.F."/>
            <person name="Bates K."/>
            <person name="Beasley H."/>
            <person name="Beasley O."/>
            <person name="Bird C.P."/>
            <person name="Bray-Allen S."/>
            <person name="Brown A.J."/>
            <person name="Brown J.Y."/>
            <person name="Burford D."/>
            <person name="Burrill W."/>
            <person name="Burton J."/>
            <person name="Carder C."/>
            <person name="Carter N.P."/>
            <person name="Chapman J.C."/>
            <person name="Chen Y."/>
            <person name="Clarke G."/>
            <person name="Clark S.Y."/>
            <person name="Clee C.M."/>
            <person name="Clegg S."/>
            <person name="Collier R.E."/>
            <person name="Corby N."/>
            <person name="Crosier M."/>
            <person name="Cummings A.T."/>
            <person name="Davies J."/>
            <person name="Dhami P."/>
            <person name="Dunn M."/>
            <person name="Dutta I."/>
            <person name="Dyer L.W."/>
            <person name="Earthrowl M.E."/>
            <person name="Faulkner L."/>
            <person name="Fleming C.J."/>
            <person name="Frankish A."/>
            <person name="Frankland J.A."/>
            <person name="French L."/>
            <person name="Fricker D.G."/>
            <person name="Garner P."/>
            <person name="Garnett J."/>
            <person name="Ghori J."/>
            <person name="Gilbert J.G.R."/>
            <person name="Glison C."/>
            <person name="Grafham D.V."/>
            <person name="Gribble S."/>
            <person name="Griffiths C."/>
            <person name="Griffiths-Jones S."/>
            <person name="Grocock R."/>
            <person name="Guy J."/>
            <person name="Hall R.E."/>
            <person name="Hammond S."/>
            <person name="Harley J.L."/>
            <person name="Harrison E.S.I."/>
            <person name="Hart E.A."/>
            <person name="Heath P.D."/>
            <person name="Henderson C.D."/>
            <person name="Hopkins B.L."/>
            <person name="Howard P.J."/>
            <person name="Howden P.J."/>
            <person name="Huckle E."/>
            <person name="Johnson C."/>
            <person name="Johnson D."/>
            <person name="Joy A.A."/>
            <person name="Kay M."/>
            <person name="Keenan S."/>
            <person name="Kershaw J.K."/>
            <person name="Kimberley A.M."/>
            <person name="King A."/>
            <person name="Knights A."/>
            <person name="Laird G.K."/>
            <person name="Langford C."/>
            <person name="Lawlor S."/>
            <person name="Leongamornlert D.A."/>
            <person name="Leversha M."/>
            <person name="Lloyd C."/>
            <person name="Lloyd D.M."/>
            <person name="Lovell J."/>
            <person name="Martin S."/>
            <person name="Mashreghi-Mohammadi M."/>
            <person name="Matthews L."/>
            <person name="McLaren S."/>
            <person name="McLay K.E."/>
            <person name="McMurray A."/>
            <person name="Milne S."/>
            <person name="Nickerson T."/>
            <person name="Nisbett J."/>
            <person name="Nordsiek G."/>
            <person name="Pearce A.V."/>
            <person name="Peck A.I."/>
            <person name="Porter K.M."/>
            <person name="Pandian R."/>
            <person name="Pelan S."/>
            <person name="Phillimore B."/>
            <person name="Povey S."/>
            <person name="Ramsey Y."/>
            <person name="Rand V."/>
            <person name="Scharfe M."/>
            <person name="Sehra H.K."/>
            <person name="Shownkeen R."/>
            <person name="Sims S.K."/>
            <person name="Skuce C.D."/>
            <person name="Smith M."/>
            <person name="Steward C.A."/>
            <person name="Swarbreck D."/>
            <person name="Sycamore N."/>
            <person name="Tester J."/>
            <person name="Thorpe A."/>
            <person name="Tracey A."/>
            <person name="Tromans A."/>
            <person name="Thomas D.W."/>
            <person name="Wall M."/>
            <person name="Wallis J.M."/>
            <person name="West A.P."/>
            <person name="Whitehead S.L."/>
            <person name="Willey D.L."/>
            <person name="Williams S.A."/>
            <person name="Wilming L."/>
            <person name="Wray P.W."/>
            <person name="Young L."/>
            <person name="Ashurst J.L."/>
            <person name="Coulson A."/>
            <person name="Blocker H."/>
            <person name="Durbin R.M."/>
            <person name="Sulston J.E."/>
            <person name="Hubbard T."/>
            <person name="Jackson M.J."/>
            <person name="Bentley D.R."/>
            <person name="Beck S."/>
            <person name="Rogers J."/>
            <person name="Dunham I."/>
        </authorList>
    </citation>
    <scope>NUCLEOTIDE SEQUENCE [LARGE SCALE GENOMIC DNA]</scope>
</reference>
<reference key="3">
    <citation type="submission" date="2005-09" db="EMBL/GenBank/DDBJ databases">
        <authorList>
            <person name="Mural R.J."/>
            <person name="Istrail S."/>
            <person name="Sutton G.G."/>
            <person name="Florea L."/>
            <person name="Halpern A.L."/>
            <person name="Mobarry C.M."/>
            <person name="Lippert R."/>
            <person name="Walenz B."/>
            <person name="Shatkay H."/>
            <person name="Dew I."/>
            <person name="Miller J.R."/>
            <person name="Flanigan M.J."/>
            <person name="Edwards N.J."/>
            <person name="Bolanos R."/>
            <person name="Fasulo D."/>
            <person name="Halldorsson B.V."/>
            <person name="Hannenhalli S."/>
            <person name="Turner R."/>
            <person name="Yooseph S."/>
            <person name="Lu F."/>
            <person name="Nusskern D.R."/>
            <person name="Shue B.C."/>
            <person name="Zheng X.H."/>
            <person name="Zhong F."/>
            <person name="Delcher A.L."/>
            <person name="Huson D.H."/>
            <person name="Kravitz S.A."/>
            <person name="Mouchard L."/>
            <person name="Reinert K."/>
            <person name="Remington K.A."/>
            <person name="Clark A.G."/>
            <person name="Waterman M.S."/>
            <person name="Eichler E.E."/>
            <person name="Adams M.D."/>
            <person name="Hunkapiller M.W."/>
            <person name="Myers E.W."/>
            <person name="Venter J.C."/>
        </authorList>
    </citation>
    <scope>NUCLEOTIDE SEQUENCE [LARGE SCALE GENOMIC DNA]</scope>
</reference>
<reference key="4">
    <citation type="journal article" date="2004" name="Genome Res.">
        <title>The status, quality, and expansion of the NIH full-length cDNA project: the Mammalian Gene Collection (MGC).</title>
        <authorList>
            <consortium name="The MGC Project Team"/>
        </authorList>
    </citation>
    <scope>NUCLEOTIDE SEQUENCE [LARGE SCALE MRNA]</scope>
    <source>
        <tissue>Lung</tissue>
    </source>
</reference>
<reference key="5">
    <citation type="journal article" date="2008" name="J. Cell. Mol. Med.">
        <title>The Kazal motifs of RECK protein inhibit MMP-9 secretion and activity and reduce metastasis of lung cancer cells in vitro and in vivo.</title>
        <authorList>
            <person name="Chang C.K."/>
            <person name="Hung W.C."/>
            <person name="Chang H.C."/>
        </authorList>
    </citation>
    <scope>FUNCTION</scope>
    <scope>DOMAIN</scope>
</reference>
<reference key="6">
    <citation type="journal article" date="2017" name="J. Cell Sci.">
        <title>Wnt proteins synergize to activate beta-catenin signaling.</title>
        <authorList>
            <person name="Alok A."/>
            <person name="Lei Z."/>
            <person name="Jagannathan N.S."/>
            <person name="Kaur S."/>
            <person name="Harmston N."/>
            <person name="Rozen S.G."/>
            <person name="Tucker-Kellogg L."/>
            <person name="Virshup D.M."/>
        </authorList>
    </citation>
    <scope>FUNCTION</scope>
</reference>
<reference key="7">
    <citation type="journal article" date="2018" name="Science">
        <title>A molecular mechanism for Wnt ligand-specific signaling.</title>
        <authorList>
            <person name="Eubelen M."/>
            <person name="Bostaille N."/>
            <person name="Cabochette P."/>
            <person name="Gauquier A."/>
            <person name="Tebabi P."/>
            <person name="Dumitru A.C."/>
            <person name="Koehler M."/>
            <person name="Gut P."/>
            <person name="Alsteens D."/>
            <person name="Stainier D.Y.R."/>
            <person name="Garcia-Pino A."/>
            <person name="Vanhollebeke B."/>
        </authorList>
    </citation>
    <scope>FUNCTION</scope>
    <scope>SUBCELLULAR LOCATION</scope>
    <scope>INTERACTION WITH ADGRA2; WNT7A AND WNT7B</scope>
    <scope>MUTAGENESIS OF 225-CYS--HIS-272</scope>
</reference>
<feature type="signal peptide" evidence="2">
    <location>
        <begin position="1"/>
        <end position="22"/>
    </location>
</feature>
<feature type="chain" id="PRO_0000016583" description="Reversion-inducing cysteine-rich protein with Kazal motifs">
    <location>
        <begin position="23"/>
        <end position="942"/>
    </location>
</feature>
<feature type="propeptide" id="PRO_0000016584" description="Removed in mature form" evidence="2">
    <location>
        <begin position="943"/>
        <end position="971"/>
    </location>
</feature>
<feature type="repeat" description="Knot 1">
    <location>
        <begin position="37"/>
        <end position="84"/>
    </location>
</feature>
<feature type="repeat" description="Knot 2">
    <location>
        <begin position="104"/>
        <end position="141"/>
    </location>
</feature>
<feature type="repeat" description="Knot 3">
    <location>
        <begin position="151"/>
        <end position="197"/>
    </location>
</feature>
<feature type="repeat" description="Knot 4">
    <location>
        <begin position="216"/>
        <end position="263"/>
    </location>
</feature>
<feature type="repeat" description="Knot 5">
    <location>
        <begin position="292"/>
        <end position="338"/>
    </location>
</feature>
<feature type="domain" description="Kazal-like 1" evidence="3">
    <location>
        <begin position="627"/>
        <end position="673"/>
    </location>
</feature>
<feature type="domain" description="Kazal-like 2" evidence="3">
    <location>
        <begin position="698"/>
        <end position="752"/>
    </location>
</feature>
<feature type="domain" description="Kazal-like 3" evidence="3">
    <location>
        <begin position="753"/>
        <end position="789"/>
    </location>
</feature>
<feature type="region of interest" description="5 X Knot repeats">
    <location>
        <begin position="37"/>
        <end position="338"/>
    </location>
</feature>
<feature type="lipid moiety-binding region" description="GPI-anchor amidated serine" evidence="2">
    <location>
        <position position="942"/>
    </location>
</feature>
<feature type="glycosylation site" description="N-linked (GlcNAc...) asparagine" evidence="2">
    <location>
        <position position="39"/>
    </location>
</feature>
<feature type="glycosylation site" description="N-linked (GlcNAc...) asparagine" evidence="2">
    <location>
        <position position="86"/>
    </location>
</feature>
<feature type="glycosylation site" description="N-linked (GlcNAc...) asparagine" evidence="2">
    <location>
        <position position="200"/>
    </location>
</feature>
<feature type="glycosylation site" description="N-linked (GlcNAc...) asparagine" evidence="2">
    <location>
        <position position="297"/>
    </location>
</feature>
<feature type="glycosylation site" description="N-linked (GlcNAc...) asparagine" evidence="2">
    <location>
        <position position="352"/>
    </location>
</feature>
<feature type="disulfide bond" evidence="3">
    <location>
        <begin position="633"/>
        <end position="658"/>
    </location>
</feature>
<feature type="disulfide bond" evidence="3">
    <location>
        <begin position="635"/>
        <end position="654"/>
    </location>
</feature>
<feature type="disulfide bond" evidence="3">
    <location>
        <begin position="643"/>
        <end position="671"/>
    </location>
</feature>
<feature type="disulfide bond" evidence="3">
    <location>
        <begin position="716"/>
        <end position="735"/>
    </location>
</feature>
<feature type="disulfide bond" evidence="3">
    <location>
        <begin position="724"/>
        <end position="750"/>
    </location>
</feature>
<feature type="disulfide bond" evidence="3">
    <location>
        <begin position="761"/>
        <end position="787"/>
    </location>
</feature>
<feature type="sequence variant" id="VAR_034021" description="In dbSNP:rs16932912.">
    <original>V</original>
    <variation>I</variation>
    <location>
        <position position="275"/>
    </location>
</feature>
<feature type="mutagenesis site" description="Abolished interaction with WNT7A." evidence="6">
    <location>
        <begin position="225"/>
        <end position="272"/>
    </location>
</feature>
<feature type="helix" evidence="12">
    <location>
        <begin position="211"/>
        <end position="218"/>
    </location>
</feature>
<feature type="helix" evidence="12">
    <location>
        <begin position="223"/>
        <end position="235"/>
    </location>
</feature>
<feature type="helix" evidence="12">
    <location>
        <begin position="239"/>
        <end position="249"/>
    </location>
</feature>
<feature type="helix" evidence="12">
    <location>
        <begin position="259"/>
        <end position="269"/>
    </location>
</feature>
<proteinExistence type="evidence at protein level"/>